<organism>
    <name type="scientific">Serratia marcescens</name>
    <dbReference type="NCBI Taxonomy" id="615"/>
    <lineage>
        <taxon>Bacteria</taxon>
        <taxon>Pseudomonadati</taxon>
        <taxon>Pseudomonadota</taxon>
        <taxon>Gammaproteobacteria</taxon>
        <taxon>Enterobacterales</taxon>
        <taxon>Yersiniaceae</taxon>
        <taxon>Serratia</taxon>
    </lineage>
</organism>
<keyword id="KW-1003">Cell membrane</keyword>
<keyword id="KW-0472">Membrane</keyword>
<keyword id="KW-0812">Transmembrane</keyword>
<keyword id="KW-1133">Transmembrane helix</keyword>
<gene>
    <name evidence="1" type="primary">aaeX</name>
</gene>
<sequence length="67" mass="7792">MSLLPVMVIFGLSFPPVFFELLVPLALFFLLRRLLQPTGIYDFVWHPALFNTALYCCLFYLISCLFV</sequence>
<feature type="chain" id="PRO_0000215055" description="Protein AaeX">
    <location>
        <begin position="1"/>
        <end position="67"/>
    </location>
</feature>
<feature type="transmembrane region" description="Helical" evidence="1">
    <location>
        <begin position="9"/>
        <end position="29"/>
    </location>
</feature>
<feature type="transmembrane region" description="Helical" evidence="1">
    <location>
        <begin position="47"/>
        <end position="67"/>
    </location>
</feature>
<dbReference type="EMBL" id="AB080601">
    <property type="protein sequence ID" value="BAB85653.1"/>
    <property type="molecule type" value="Genomic_DNA"/>
</dbReference>
<dbReference type="STRING" id="273526.SMDB11_3631"/>
<dbReference type="GO" id="GO:0005886">
    <property type="term" value="C:plasma membrane"/>
    <property type="evidence" value="ECO:0007669"/>
    <property type="project" value="UniProtKB-SubCell"/>
</dbReference>
<dbReference type="HAMAP" id="MF_01546">
    <property type="entry name" value="AaeX"/>
    <property type="match status" value="1"/>
</dbReference>
<dbReference type="InterPro" id="IPR012451">
    <property type="entry name" value="DUF1656"/>
</dbReference>
<dbReference type="NCBIfam" id="NF008615">
    <property type="entry name" value="PRK11594.1"/>
    <property type="match status" value="1"/>
</dbReference>
<dbReference type="Pfam" id="PF07869">
    <property type="entry name" value="DUF1656"/>
    <property type="match status" value="1"/>
</dbReference>
<name>AAEX_SERMA</name>
<evidence type="ECO:0000255" key="1">
    <source>
        <dbReference type="HAMAP-Rule" id="MF_01546"/>
    </source>
</evidence>
<accession>Q8RQS4</accession>
<protein>
    <recommendedName>
        <fullName evidence="1">Protein AaeX</fullName>
    </recommendedName>
</protein>
<reference key="1">
    <citation type="submission" date="2002-02" db="EMBL/GenBank/DDBJ databases">
        <title>Serratia marcescens and Escherichia coli genes controlling temperature-dependent production of structurally unrelated secondary metabolites such as prodigiosin and serrawettin.</title>
        <authorList>
            <person name="Baba M."/>
            <person name="Midorikawa Y."/>
            <person name="Nakagawa Y."/>
            <person name="Fujita M."/>
            <person name="Matsuyama T."/>
        </authorList>
    </citation>
    <scope>NUCLEOTIDE SEQUENCE [GENOMIC DNA]</scope>
</reference>
<proteinExistence type="inferred from homology"/>
<comment type="subcellular location">
    <subcellularLocation>
        <location evidence="1">Cell membrane</location>
        <topology evidence="1">Multi-pass membrane protein</topology>
    </subcellularLocation>
</comment>
<comment type="similarity">
    <text evidence="1">Belongs to the AaeX family.</text>
</comment>